<sequence length="406" mass="44536">MFIILAAGHGKRMNSGLPKVLHKIGNFSMLQHIIYNARQLNPENISVVANLPLIERLKCLEDIQLITQESTLGTGDAVKTAVRNMKELSDSNIIVVQYGDTPLIKNSTITQMVSCLEGKALVCLGFKTSNKEYGRLIIENGSLREIVETQDDENSDEEFLANAGIMVAYAKNLRELVEKIECNGSTYEYYLTDIVSIAVKSNLNVGYVTTDEEEATGINSRNDLAKAEFYFQENRRKFFTDSGVTLVAPETVFFSLDTQIGMDSIIYPYVFFGPGVRIGPGAKIGPFTKCEDTTIGDGAIVGNFVEAKASDIGTNTKIKHLSYIGNTEVGRESNIGAGTVVCNYDGKKKHRTNIGSNCFVGANSSLIAPLNVHDESVIAAGSIIVKDVPKKRLVITRRKQMVKKIK</sequence>
<feature type="chain" id="PRO_0000233879" description="Bifunctional protein GlmU">
    <location>
        <begin position="1"/>
        <end position="406"/>
    </location>
</feature>
<feature type="region of interest" description="Pyrophosphorylase" evidence="1">
    <location>
        <begin position="1"/>
        <end position="221"/>
    </location>
</feature>
<feature type="region of interest" description="Linker" evidence="1">
    <location>
        <begin position="222"/>
        <end position="242"/>
    </location>
</feature>
<feature type="region of interest" description="N-acetyltransferase" evidence="1">
    <location>
        <begin position="243"/>
        <end position="406"/>
    </location>
</feature>
<feature type="active site" description="Proton acceptor" evidence="1">
    <location>
        <position position="320"/>
    </location>
</feature>
<feature type="binding site" evidence="1">
    <location>
        <begin position="5"/>
        <end position="8"/>
    </location>
    <ligand>
        <name>UDP-N-acetyl-alpha-D-glucosamine</name>
        <dbReference type="ChEBI" id="CHEBI:57705"/>
    </ligand>
</feature>
<feature type="binding site" evidence="1">
    <location>
        <position position="19"/>
    </location>
    <ligand>
        <name>UDP-N-acetyl-alpha-D-glucosamine</name>
        <dbReference type="ChEBI" id="CHEBI:57705"/>
    </ligand>
</feature>
<feature type="binding site" evidence="1">
    <location>
        <position position="68"/>
    </location>
    <ligand>
        <name>UDP-N-acetyl-alpha-D-glucosamine</name>
        <dbReference type="ChEBI" id="CHEBI:57705"/>
    </ligand>
</feature>
<feature type="binding site" evidence="1">
    <location>
        <begin position="73"/>
        <end position="74"/>
    </location>
    <ligand>
        <name>UDP-N-acetyl-alpha-D-glucosamine</name>
        <dbReference type="ChEBI" id="CHEBI:57705"/>
    </ligand>
</feature>
<feature type="binding site" evidence="1">
    <location>
        <begin position="98"/>
        <end position="100"/>
    </location>
    <ligand>
        <name>UDP-N-acetyl-alpha-D-glucosamine</name>
        <dbReference type="ChEBI" id="CHEBI:57705"/>
    </ligand>
</feature>
<feature type="binding site" evidence="1">
    <location>
        <position position="100"/>
    </location>
    <ligand>
        <name>Mg(2+)</name>
        <dbReference type="ChEBI" id="CHEBI:18420"/>
    </ligand>
</feature>
<feature type="binding site" evidence="1">
    <location>
        <position position="134"/>
    </location>
    <ligand>
        <name>UDP-N-acetyl-alpha-D-glucosamine</name>
        <dbReference type="ChEBI" id="CHEBI:57705"/>
    </ligand>
</feature>
<feature type="binding site" evidence="1">
    <location>
        <position position="148"/>
    </location>
    <ligand>
        <name>UDP-N-acetyl-alpha-D-glucosamine</name>
        <dbReference type="ChEBI" id="CHEBI:57705"/>
    </ligand>
</feature>
<feature type="binding site" evidence="1">
    <location>
        <position position="162"/>
    </location>
    <ligand>
        <name>UDP-N-acetyl-alpha-D-glucosamine</name>
        <dbReference type="ChEBI" id="CHEBI:57705"/>
    </ligand>
</feature>
<feature type="binding site" evidence="1">
    <location>
        <position position="219"/>
    </location>
    <ligand>
        <name>Mg(2+)</name>
        <dbReference type="ChEBI" id="CHEBI:18420"/>
    </ligand>
</feature>
<feature type="binding site" evidence="1">
    <location>
        <position position="219"/>
    </location>
    <ligand>
        <name>UDP-N-acetyl-alpha-D-glucosamine</name>
        <dbReference type="ChEBI" id="CHEBI:57705"/>
    </ligand>
</feature>
<feature type="binding site" evidence="1">
    <location>
        <position position="308"/>
    </location>
    <ligand>
        <name>UDP-N-acetyl-alpha-D-glucosamine</name>
        <dbReference type="ChEBI" id="CHEBI:57705"/>
    </ligand>
</feature>
<feature type="binding site" evidence="1">
    <location>
        <position position="323"/>
    </location>
    <ligand>
        <name>UDP-N-acetyl-alpha-D-glucosamine</name>
        <dbReference type="ChEBI" id="CHEBI:57705"/>
    </ligand>
</feature>
<feature type="binding site" evidence="1">
    <location>
        <position position="334"/>
    </location>
    <ligand>
        <name>UDP-N-acetyl-alpha-D-glucosamine</name>
        <dbReference type="ChEBI" id="CHEBI:57705"/>
    </ligand>
</feature>
<feature type="binding site" evidence="1">
    <location>
        <position position="337"/>
    </location>
    <ligand>
        <name>acetyl-CoA</name>
        <dbReference type="ChEBI" id="CHEBI:57288"/>
    </ligand>
</feature>
<feature type="binding site" evidence="1">
    <location>
        <begin position="343"/>
        <end position="344"/>
    </location>
    <ligand>
        <name>acetyl-CoA</name>
        <dbReference type="ChEBI" id="CHEBI:57288"/>
    </ligand>
</feature>
<feature type="binding site" evidence="1">
    <location>
        <position position="380"/>
    </location>
    <ligand>
        <name>acetyl-CoA</name>
        <dbReference type="ChEBI" id="CHEBI:57288"/>
    </ligand>
</feature>
<feature type="binding site" evidence="1">
    <location>
        <position position="397"/>
    </location>
    <ligand>
        <name>acetyl-CoA</name>
        <dbReference type="ChEBI" id="CHEBI:57288"/>
    </ligand>
</feature>
<proteinExistence type="inferred from homology"/>
<protein>
    <recommendedName>
        <fullName evidence="1">Bifunctional protein GlmU</fullName>
    </recommendedName>
    <domain>
        <recommendedName>
            <fullName evidence="1">UDP-N-acetylglucosamine pyrophosphorylase</fullName>
            <ecNumber evidence="1">2.7.7.23</ecNumber>
        </recommendedName>
        <alternativeName>
            <fullName evidence="1">N-acetylglucosamine-1-phosphate uridyltransferase</fullName>
        </alternativeName>
    </domain>
    <domain>
        <recommendedName>
            <fullName evidence="1">Glucosamine-1-phosphate N-acetyltransferase</fullName>
            <ecNumber evidence="1">2.3.1.157</ecNumber>
        </recommendedName>
    </domain>
</protein>
<gene>
    <name evidence="1" type="primary">glmU</name>
    <name type="ordered locus">Wbm0088</name>
</gene>
<keyword id="KW-0012">Acyltransferase</keyword>
<keyword id="KW-0133">Cell shape</keyword>
<keyword id="KW-0961">Cell wall biogenesis/degradation</keyword>
<keyword id="KW-0963">Cytoplasm</keyword>
<keyword id="KW-0460">Magnesium</keyword>
<keyword id="KW-0479">Metal-binding</keyword>
<keyword id="KW-0511">Multifunctional enzyme</keyword>
<keyword id="KW-0548">Nucleotidyltransferase</keyword>
<keyword id="KW-0573">Peptidoglycan synthesis</keyword>
<keyword id="KW-1185">Reference proteome</keyword>
<keyword id="KW-0677">Repeat</keyword>
<keyword id="KW-0808">Transferase</keyword>
<comment type="function">
    <text evidence="1">Catalyzes the last two sequential reactions in the de novo biosynthetic pathway for UDP-N-acetylglucosamine (UDP-GlcNAc). The C-terminal domain catalyzes the transfer of acetyl group from acetyl coenzyme A to glucosamine-1-phosphate (GlcN-1-P) to produce N-acetylglucosamine-1-phosphate (GlcNAc-1-P), which is converted into UDP-GlcNAc by the transfer of uridine 5-monophosphate (from uridine 5-triphosphate), a reaction catalyzed by the N-terminal domain.</text>
</comment>
<comment type="catalytic activity">
    <reaction evidence="1">
        <text>alpha-D-glucosamine 1-phosphate + acetyl-CoA = N-acetyl-alpha-D-glucosamine 1-phosphate + CoA + H(+)</text>
        <dbReference type="Rhea" id="RHEA:13725"/>
        <dbReference type="ChEBI" id="CHEBI:15378"/>
        <dbReference type="ChEBI" id="CHEBI:57287"/>
        <dbReference type="ChEBI" id="CHEBI:57288"/>
        <dbReference type="ChEBI" id="CHEBI:57776"/>
        <dbReference type="ChEBI" id="CHEBI:58516"/>
        <dbReference type="EC" id="2.3.1.157"/>
    </reaction>
</comment>
<comment type="catalytic activity">
    <reaction evidence="1">
        <text>N-acetyl-alpha-D-glucosamine 1-phosphate + UTP + H(+) = UDP-N-acetyl-alpha-D-glucosamine + diphosphate</text>
        <dbReference type="Rhea" id="RHEA:13509"/>
        <dbReference type="ChEBI" id="CHEBI:15378"/>
        <dbReference type="ChEBI" id="CHEBI:33019"/>
        <dbReference type="ChEBI" id="CHEBI:46398"/>
        <dbReference type="ChEBI" id="CHEBI:57705"/>
        <dbReference type="ChEBI" id="CHEBI:57776"/>
        <dbReference type="EC" id="2.7.7.23"/>
    </reaction>
</comment>
<comment type="cofactor">
    <cofactor evidence="1">
        <name>Mg(2+)</name>
        <dbReference type="ChEBI" id="CHEBI:18420"/>
    </cofactor>
    <text evidence="1">Binds 1 Mg(2+) ion per subunit.</text>
</comment>
<comment type="pathway">
    <text evidence="1">Nucleotide-sugar biosynthesis; UDP-N-acetyl-alpha-D-glucosamine biosynthesis; N-acetyl-alpha-D-glucosamine 1-phosphate from alpha-D-glucosamine 6-phosphate (route II): step 2/2.</text>
</comment>
<comment type="pathway">
    <text evidence="1">Nucleotide-sugar biosynthesis; UDP-N-acetyl-alpha-D-glucosamine biosynthesis; UDP-N-acetyl-alpha-D-glucosamine from N-acetyl-alpha-D-glucosamine 1-phosphate: step 1/1.</text>
</comment>
<comment type="pathway">
    <text evidence="1">Bacterial outer membrane biogenesis; LPS lipid A biosynthesis.</text>
</comment>
<comment type="subunit">
    <text evidence="1">Homotrimer.</text>
</comment>
<comment type="subcellular location">
    <subcellularLocation>
        <location evidence="1">Cytoplasm</location>
    </subcellularLocation>
</comment>
<comment type="similarity">
    <text evidence="1">In the N-terminal section; belongs to the N-acetylglucosamine-1-phosphate uridyltransferase family.</text>
</comment>
<comment type="similarity">
    <text evidence="1">In the C-terminal section; belongs to the transferase hexapeptide repeat family.</text>
</comment>
<organism>
    <name type="scientific">Wolbachia sp. subsp. Brugia malayi (strain TRS)</name>
    <dbReference type="NCBI Taxonomy" id="292805"/>
    <lineage>
        <taxon>Bacteria</taxon>
        <taxon>Pseudomonadati</taxon>
        <taxon>Pseudomonadota</taxon>
        <taxon>Alphaproteobacteria</taxon>
        <taxon>Rickettsiales</taxon>
        <taxon>Anaplasmataceae</taxon>
        <taxon>Wolbachieae</taxon>
        <taxon>Wolbachia</taxon>
    </lineage>
</organism>
<accession>Q5GTJ4</accession>
<evidence type="ECO:0000255" key="1">
    <source>
        <dbReference type="HAMAP-Rule" id="MF_01631"/>
    </source>
</evidence>
<dbReference type="EC" id="2.7.7.23" evidence="1"/>
<dbReference type="EC" id="2.3.1.157" evidence="1"/>
<dbReference type="EMBL" id="AE017321">
    <property type="protein sequence ID" value="AAW70680.1"/>
    <property type="molecule type" value="Genomic_DNA"/>
</dbReference>
<dbReference type="RefSeq" id="WP_011256290.1">
    <property type="nucleotide sequence ID" value="NC_006833.1"/>
</dbReference>
<dbReference type="SMR" id="Q5GTJ4"/>
<dbReference type="STRING" id="292805.Wbm0088"/>
<dbReference type="KEGG" id="wbm:Wbm0088"/>
<dbReference type="eggNOG" id="COG1207">
    <property type="taxonomic scope" value="Bacteria"/>
</dbReference>
<dbReference type="HOGENOM" id="CLU_029499_15_2_5"/>
<dbReference type="UniPathway" id="UPA00113">
    <property type="reaction ID" value="UER00532"/>
</dbReference>
<dbReference type="UniPathway" id="UPA00113">
    <property type="reaction ID" value="UER00533"/>
</dbReference>
<dbReference type="UniPathway" id="UPA00973"/>
<dbReference type="Proteomes" id="UP000000534">
    <property type="component" value="Chromosome"/>
</dbReference>
<dbReference type="GO" id="GO:0005737">
    <property type="term" value="C:cytoplasm"/>
    <property type="evidence" value="ECO:0007669"/>
    <property type="project" value="UniProtKB-SubCell"/>
</dbReference>
<dbReference type="GO" id="GO:0016020">
    <property type="term" value="C:membrane"/>
    <property type="evidence" value="ECO:0007669"/>
    <property type="project" value="GOC"/>
</dbReference>
<dbReference type="GO" id="GO:0019134">
    <property type="term" value="F:glucosamine-1-phosphate N-acetyltransferase activity"/>
    <property type="evidence" value="ECO:0007669"/>
    <property type="project" value="UniProtKB-UniRule"/>
</dbReference>
<dbReference type="GO" id="GO:0000287">
    <property type="term" value="F:magnesium ion binding"/>
    <property type="evidence" value="ECO:0007669"/>
    <property type="project" value="UniProtKB-UniRule"/>
</dbReference>
<dbReference type="GO" id="GO:0003977">
    <property type="term" value="F:UDP-N-acetylglucosamine diphosphorylase activity"/>
    <property type="evidence" value="ECO:0007669"/>
    <property type="project" value="UniProtKB-UniRule"/>
</dbReference>
<dbReference type="GO" id="GO:0000902">
    <property type="term" value="P:cell morphogenesis"/>
    <property type="evidence" value="ECO:0007669"/>
    <property type="project" value="UniProtKB-UniRule"/>
</dbReference>
<dbReference type="GO" id="GO:0071555">
    <property type="term" value="P:cell wall organization"/>
    <property type="evidence" value="ECO:0007669"/>
    <property type="project" value="UniProtKB-KW"/>
</dbReference>
<dbReference type="GO" id="GO:0009245">
    <property type="term" value="P:lipid A biosynthetic process"/>
    <property type="evidence" value="ECO:0007669"/>
    <property type="project" value="UniProtKB-UniRule"/>
</dbReference>
<dbReference type="GO" id="GO:0009252">
    <property type="term" value="P:peptidoglycan biosynthetic process"/>
    <property type="evidence" value="ECO:0007669"/>
    <property type="project" value="UniProtKB-UniRule"/>
</dbReference>
<dbReference type="GO" id="GO:0008360">
    <property type="term" value="P:regulation of cell shape"/>
    <property type="evidence" value="ECO:0007669"/>
    <property type="project" value="UniProtKB-KW"/>
</dbReference>
<dbReference type="GO" id="GO:0006048">
    <property type="term" value="P:UDP-N-acetylglucosamine biosynthetic process"/>
    <property type="evidence" value="ECO:0007669"/>
    <property type="project" value="UniProtKB-UniPathway"/>
</dbReference>
<dbReference type="CDD" id="cd02540">
    <property type="entry name" value="GT2_GlmU_N_bac"/>
    <property type="match status" value="1"/>
</dbReference>
<dbReference type="Gene3D" id="2.160.10.10">
    <property type="entry name" value="Hexapeptide repeat proteins"/>
    <property type="match status" value="1"/>
</dbReference>
<dbReference type="Gene3D" id="3.90.550.10">
    <property type="entry name" value="Spore Coat Polysaccharide Biosynthesis Protein SpsA, Chain A"/>
    <property type="match status" value="1"/>
</dbReference>
<dbReference type="HAMAP" id="MF_01631">
    <property type="entry name" value="GlmU"/>
    <property type="match status" value="1"/>
</dbReference>
<dbReference type="InterPro" id="IPR005882">
    <property type="entry name" value="Bifunctional_GlmU"/>
</dbReference>
<dbReference type="InterPro" id="IPR050065">
    <property type="entry name" value="GlmU-like"/>
</dbReference>
<dbReference type="InterPro" id="IPR001451">
    <property type="entry name" value="Hexapep"/>
</dbReference>
<dbReference type="InterPro" id="IPR025877">
    <property type="entry name" value="MobA-like_NTP_Trfase"/>
</dbReference>
<dbReference type="InterPro" id="IPR029044">
    <property type="entry name" value="Nucleotide-diphossugar_trans"/>
</dbReference>
<dbReference type="InterPro" id="IPR011004">
    <property type="entry name" value="Trimer_LpxA-like_sf"/>
</dbReference>
<dbReference type="PANTHER" id="PTHR43584:SF3">
    <property type="entry name" value="BIFUNCTIONAL PROTEIN GLMU"/>
    <property type="match status" value="1"/>
</dbReference>
<dbReference type="PANTHER" id="PTHR43584">
    <property type="entry name" value="NUCLEOTIDYL TRANSFERASE"/>
    <property type="match status" value="1"/>
</dbReference>
<dbReference type="Pfam" id="PF00132">
    <property type="entry name" value="Hexapep"/>
    <property type="match status" value="1"/>
</dbReference>
<dbReference type="Pfam" id="PF14602">
    <property type="entry name" value="Hexapep_2"/>
    <property type="match status" value="1"/>
</dbReference>
<dbReference type="Pfam" id="PF12804">
    <property type="entry name" value="NTP_transf_3"/>
    <property type="match status" value="1"/>
</dbReference>
<dbReference type="SUPFAM" id="SSF53448">
    <property type="entry name" value="Nucleotide-diphospho-sugar transferases"/>
    <property type="match status" value="1"/>
</dbReference>
<dbReference type="SUPFAM" id="SSF51161">
    <property type="entry name" value="Trimeric LpxA-like enzymes"/>
    <property type="match status" value="1"/>
</dbReference>
<name>GLMU_WOLTR</name>
<reference key="1">
    <citation type="journal article" date="2005" name="PLoS Biol.">
        <title>The Wolbachia genome of Brugia malayi: endosymbiont evolution within a human pathogenic nematode.</title>
        <authorList>
            <person name="Foster J."/>
            <person name="Ganatra M."/>
            <person name="Kamal I."/>
            <person name="Ware J."/>
            <person name="Makarova K."/>
            <person name="Ivanova N."/>
            <person name="Bhattacharyya A."/>
            <person name="Kapatral V."/>
            <person name="Kumar S."/>
            <person name="Posfai J."/>
            <person name="Vincze T."/>
            <person name="Ingram J."/>
            <person name="Moran L."/>
            <person name="Lapidus A."/>
            <person name="Omelchenko M."/>
            <person name="Kyrpides N."/>
            <person name="Ghedin E."/>
            <person name="Wang S."/>
            <person name="Goltsman E."/>
            <person name="Joukov V."/>
            <person name="Ostrovskaya O."/>
            <person name="Tsukerman K."/>
            <person name="Mazur M."/>
            <person name="Comb D."/>
            <person name="Koonin E."/>
            <person name="Slatko B."/>
        </authorList>
    </citation>
    <scope>NUCLEOTIDE SEQUENCE [LARGE SCALE GENOMIC DNA]</scope>
    <source>
        <strain>TRS</strain>
    </source>
</reference>